<reference key="1">
    <citation type="journal article" date="2000" name="Nature">
        <title>Sequence and analysis of chromosome 1 of the plant Arabidopsis thaliana.</title>
        <authorList>
            <person name="Theologis A."/>
            <person name="Ecker J.R."/>
            <person name="Palm C.J."/>
            <person name="Federspiel N.A."/>
            <person name="Kaul S."/>
            <person name="White O."/>
            <person name="Alonso J."/>
            <person name="Altafi H."/>
            <person name="Araujo R."/>
            <person name="Bowman C.L."/>
            <person name="Brooks S.Y."/>
            <person name="Buehler E."/>
            <person name="Chan A."/>
            <person name="Chao Q."/>
            <person name="Chen H."/>
            <person name="Cheuk R.F."/>
            <person name="Chin C.W."/>
            <person name="Chung M.K."/>
            <person name="Conn L."/>
            <person name="Conway A.B."/>
            <person name="Conway A.R."/>
            <person name="Creasy T.H."/>
            <person name="Dewar K."/>
            <person name="Dunn P."/>
            <person name="Etgu P."/>
            <person name="Feldblyum T.V."/>
            <person name="Feng J.-D."/>
            <person name="Fong B."/>
            <person name="Fujii C.Y."/>
            <person name="Gill J.E."/>
            <person name="Goldsmith A.D."/>
            <person name="Haas B."/>
            <person name="Hansen N.F."/>
            <person name="Hughes B."/>
            <person name="Huizar L."/>
            <person name="Hunter J.L."/>
            <person name="Jenkins J."/>
            <person name="Johnson-Hopson C."/>
            <person name="Khan S."/>
            <person name="Khaykin E."/>
            <person name="Kim C.J."/>
            <person name="Koo H.L."/>
            <person name="Kremenetskaia I."/>
            <person name="Kurtz D.B."/>
            <person name="Kwan A."/>
            <person name="Lam B."/>
            <person name="Langin-Hooper S."/>
            <person name="Lee A."/>
            <person name="Lee J.M."/>
            <person name="Lenz C.A."/>
            <person name="Li J.H."/>
            <person name="Li Y.-P."/>
            <person name="Lin X."/>
            <person name="Liu S.X."/>
            <person name="Liu Z.A."/>
            <person name="Luros J.S."/>
            <person name="Maiti R."/>
            <person name="Marziali A."/>
            <person name="Militscher J."/>
            <person name="Miranda M."/>
            <person name="Nguyen M."/>
            <person name="Nierman W.C."/>
            <person name="Osborne B.I."/>
            <person name="Pai G."/>
            <person name="Peterson J."/>
            <person name="Pham P.K."/>
            <person name="Rizzo M."/>
            <person name="Rooney T."/>
            <person name="Rowley D."/>
            <person name="Sakano H."/>
            <person name="Salzberg S.L."/>
            <person name="Schwartz J.R."/>
            <person name="Shinn P."/>
            <person name="Southwick A.M."/>
            <person name="Sun H."/>
            <person name="Tallon L.J."/>
            <person name="Tambunga G."/>
            <person name="Toriumi M.J."/>
            <person name="Town C.D."/>
            <person name="Utterback T."/>
            <person name="Van Aken S."/>
            <person name="Vaysberg M."/>
            <person name="Vysotskaia V.S."/>
            <person name="Walker M."/>
            <person name="Wu D."/>
            <person name="Yu G."/>
            <person name="Fraser C.M."/>
            <person name="Venter J.C."/>
            <person name="Davis R.W."/>
        </authorList>
    </citation>
    <scope>NUCLEOTIDE SEQUENCE [LARGE SCALE GENOMIC DNA]</scope>
    <source>
        <strain>cv. Columbia</strain>
    </source>
</reference>
<reference key="2">
    <citation type="journal article" date="2017" name="Plant J.">
        <title>Araport11: a complete reannotation of the Arabidopsis thaliana reference genome.</title>
        <authorList>
            <person name="Cheng C.Y."/>
            <person name="Krishnakumar V."/>
            <person name="Chan A.P."/>
            <person name="Thibaud-Nissen F."/>
            <person name="Schobel S."/>
            <person name="Town C.D."/>
        </authorList>
    </citation>
    <scope>GENOME REANNOTATION</scope>
    <source>
        <strain>cv. Columbia</strain>
    </source>
</reference>
<keyword id="KW-0025">Alternative splicing</keyword>
<keyword id="KW-1185">Reference proteome</keyword>
<organism>
    <name type="scientific">Arabidopsis thaliana</name>
    <name type="common">Mouse-ear cress</name>
    <dbReference type="NCBI Taxonomy" id="3702"/>
    <lineage>
        <taxon>Eukaryota</taxon>
        <taxon>Viridiplantae</taxon>
        <taxon>Streptophyta</taxon>
        <taxon>Embryophyta</taxon>
        <taxon>Tracheophyta</taxon>
        <taxon>Spermatophyta</taxon>
        <taxon>Magnoliopsida</taxon>
        <taxon>eudicotyledons</taxon>
        <taxon>Gunneridae</taxon>
        <taxon>Pentapetalae</taxon>
        <taxon>rosids</taxon>
        <taxon>malvids</taxon>
        <taxon>Brassicales</taxon>
        <taxon>Brassicaceae</taxon>
        <taxon>Camelineae</taxon>
        <taxon>Arabidopsis</taxon>
    </lineage>
</organism>
<dbReference type="EMBL" id="AC004557">
    <property type="protein sequence ID" value="AAF99741.1"/>
    <property type="molecule type" value="Genomic_DNA"/>
</dbReference>
<dbReference type="EMBL" id="CP002684">
    <property type="protein sequence ID" value="AEE30838.1"/>
    <property type="molecule type" value="Genomic_DNA"/>
</dbReference>
<dbReference type="PIR" id="A86400">
    <property type="entry name" value="A86400"/>
</dbReference>
<dbReference type="RefSeq" id="NP_174069.1">
    <molecule id="Q9FZI7-2"/>
    <property type="nucleotide sequence ID" value="NM_102513.1"/>
</dbReference>
<dbReference type="PaxDb" id="3702-AT1G27490.1"/>
<dbReference type="EnsemblPlants" id="AT1G27490.1">
    <molecule id="Q9FZI7-2"/>
    <property type="protein sequence ID" value="AT1G27490.1"/>
    <property type="gene ID" value="AT1G27490"/>
</dbReference>
<dbReference type="GeneID" id="839640"/>
<dbReference type="Gramene" id="AT1G27490.1">
    <molecule id="Q9FZI7-2"/>
    <property type="protein sequence ID" value="AT1G27490.1"/>
    <property type="gene ID" value="AT1G27490"/>
</dbReference>
<dbReference type="KEGG" id="ath:AT1G27490"/>
<dbReference type="Araport" id="AT1G27490"/>
<dbReference type="TAIR" id="AT1G27490"/>
<dbReference type="HOGENOM" id="CLU_1621275_0_0_1"/>
<dbReference type="InParanoid" id="Q9FZI7"/>
<dbReference type="OMA" id="CCKWRSD"/>
<dbReference type="PhylomeDB" id="Q9FZI7"/>
<dbReference type="PRO" id="PR:Q9FZI7"/>
<dbReference type="Proteomes" id="UP000006548">
    <property type="component" value="Chromosome 1"/>
</dbReference>
<dbReference type="InterPro" id="IPR036047">
    <property type="entry name" value="F-box-like_dom_sf"/>
</dbReference>
<dbReference type="SUPFAM" id="SSF81383">
    <property type="entry name" value="F-box domain"/>
    <property type="match status" value="1"/>
</dbReference>
<proteinExistence type="evidence at transcript level"/>
<accession>Q9FZI7</accession>
<accession>F4HSX8</accession>
<gene>
    <name type="ordered locus">At1g27490</name>
    <name type="ORF">F17L21.28</name>
</gene>
<feature type="chain" id="PRO_0000396028" description="Probable F-box protein At1g27490">
    <location>
        <begin position="1"/>
        <end position="173"/>
    </location>
</feature>
<feature type="domain" description="F-box">
    <location>
        <begin position="1"/>
        <end position="46"/>
    </location>
</feature>
<feature type="splice variant" id="VSP_042250" description="In isoform 2." evidence="1">
    <original>LNLDTGTVSPTFRLS</original>
    <variation>FLADEQ</variation>
    <location>
        <begin position="95"/>
        <end position="109"/>
    </location>
</feature>
<evidence type="ECO:0000305" key="1"/>
<protein>
    <recommendedName>
        <fullName>Probable F-box protein At1g27490</fullName>
    </recommendedName>
</protein>
<sequence length="173" mass="19574">MEWSLPVDLQEEILSRVPAKSLARWKSTPKQWKGPISIEFLHLLRSTLKFPLLNLHLKSKSIYVTSFTAMVFCYAPPSTKDSRFGIHVQGKPSGLNLDTGTVSPTFRLSNKVVVCCKWRSDSINTIYFVGENKHVQVDQRRGDLTLGQSCSFLMNYVPSFVQIQQGTLLAPRT</sequence>
<name>FB313_ARATH</name>
<comment type="alternative products">
    <event type="alternative splicing"/>
    <isoform>
        <id>Q9FZI7-1</id>
        <name>1</name>
        <sequence type="displayed"/>
    </isoform>
    <isoform>
        <id>Q9FZI7-2</id>
        <name>2</name>
        <sequence type="described" ref="VSP_042250"/>
    </isoform>
</comment>